<keyword id="KW-0342">GTP-binding</keyword>
<keyword id="KW-0547">Nucleotide-binding</keyword>
<keyword id="KW-0677">Repeat</keyword>
<keyword id="KW-0690">Ribosome biogenesis</keyword>
<dbReference type="EMBL" id="CP000969">
    <property type="protein sequence ID" value="ACB09682.1"/>
    <property type="molecule type" value="Genomic_DNA"/>
</dbReference>
<dbReference type="RefSeq" id="WP_012311081.1">
    <property type="nucleotide sequence ID" value="NC_010483.1"/>
</dbReference>
<dbReference type="SMR" id="B1LBI4"/>
<dbReference type="KEGG" id="trq:TRQ2_1338"/>
<dbReference type="HOGENOM" id="CLU_016077_6_2_0"/>
<dbReference type="Proteomes" id="UP000001687">
    <property type="component" value="Chromosome"/>
</dbReference>
<dbReference type="GO" id="GO:0005525">
    <property type="term" value="F:GTP binding"/>
    <property type="evidence" value="ECO:0007669"/>
    <property type="project" value="UniProtKB-UniRule"/>
</dbReference>
<dbReference type="GO" id="GO:0043022">
    <property type="term" value="F:ribosome binding"/>
    <property type="evidence" value="ECO:0007669"/>
    <property type="project" value="TreeGrafter"/>
</dbReference>
<dbReference type="GO" id="GO:0042254">
    <property type="term" value="P:ribosome biogenesis"/>
    <property type="evidence" value="ECO:0007669"/>
    <property type="project" value="UniProtKB-KW"/>
</dbReference>
<dbReference type="CDD" id="cd01894">
    <property type="entry name" value="EngA1"/>
    <property type="match status" value="1"/>
</dbReference>
<dbReference type="CDD" id="cd01895">
    <property type="entry name" value="EngA2"/>
    <property type="match status" value="1"/>
</dbReference>
<dbReference type="FunFam" id="3.40.50.300:FF:000040">
    <property type="entry name" value="GTPase Der"/>
    <property type="match status" value="1"/>
</dbReference>
<dbReference type="FunFam" id="3.40.50.300:FF:000057">
    <property type="entry name" value="GTPase Der"/>
    <property type="match status" value="1"/>
</dbReference>
<dbReference type="Gene3D" id="3.30.300.20">
    <property type="match status" value="1"/>
</dbReference>
<dbReference type="Gene3D" id="3.40.50.300">
    <property type="entry name" value="P-loop containing nucleotide triphosphate hydrolases"/>
    <property type="match status" value="2"/>
</dbReference>
<dbReference type="HAMAP" id="MF_00195">
    <property type="entry name" value="GTPase_Der"/>
    <property type="match status" value="1"/>
</dbReference>
<dbReference type="InterPro" id="IPR031166">
    <property type="entry name" value="G_ENGA"/>
</dbReference>
<dbReference type="InterPro" id="IPR006073">
    <property type="entry name" value="GTP-bd"/>
</dbReference>
<dbReference type="InterPro" id="IPR016484">
    <property type="entry name" value="GTPase_Der"/>
</dbReference>
<dbReference type="InterPro" id="IPR032859">
    <property type="entry name" value="KH_dom-like"/>
</dbReference>
<dbReference type="InterPro" id="IPR015946">
    <property type="entry name" value="KH_dom-like_a/b"/>
</dbReference>
<dbReference type="InterPro" id="IPR027417">
    <property type="entry name" value="P-loop_NTPase"/>
</dbReference>
<dbReference type="InterPro" id="IPR005225">
    <property type="entry name" value="Small_GTP-bd"/>
</dbReference>
<dbReference type="NCBIfam" id="TIGR03594">
    <property type="entry name" value="GTPase_EngA"/>
    <property type="match status" value="1"/>
</dbReference>
<dbReference type="NCBIfam" id="TIGR00231">
    <property type="entry name" value="small_GTP"/>
    <property type="match status" value="2"/>
</dbReference>
<dbReference type="PANTHER" id="PTHR43834">
    <property type="entry name" value="GTPASE DER"/>
    <property type="match status" value="1"/>
</dbReference>
<dbReference type="PANTHER" id="PTHR43834:SF6">
    <property type="entry name" value="GTPASE DER"/>
    <property type="match status" value="1"/>
</dbReference>
<dbReference type="Pfam" id="PF14714">
    <property type="entry name" value="KH_dom-like"/>
    <property type="match status" value="1"/>
</dbReference>
<dbReference type="Pfam" id="PF01926">
    <property type="entry name" value="MMR_HSR1"/>
    <property type="match status" value="2"/>
</dbReference>
<dbReference type="PIRSF" id="PIRSF006485">
    <property type="entry name" value="GTP-binding_EngA"/>
    <property type="match status" value="1"/>
</dbReference>
<dbReference type="PRINTS" id="PR00326">
    <property type="entry name" value="GTP1OBG"/>
</dbReference>
<dbReference type="SUPFAM" id="SSF52540">
    <property type="entry name" value="P-loop containing nucleoside triphosphate hydrolases"/>
    <property type="match status" value="2"/>
</dbReference>
<dbReference type="PROSITE" id="PS51712">
    <property type="entry name" value="G_ENGA"/>
    <property type="match status" value="2"/>
</dbReference>
<comment type="function">
    <text evidence="1">GTPase that plays an essential role in the late steps of ribosome biogenesis.</text>
</comment>
<comment type="subunit">
    <text evidence="1">Associates with the 50S ribosomal subunit.</text>
</comment>
<comment type="similarity">
    <text evidence="1">Belongs to the TRAFAC class TrmE-Era-EngA-EngB-Septin-like GTPase superfamily. EngA (Der) GTPase family.</text>
</comment>
<feature type="chain" id="PRO_1000099174" description="GTPase Der">
    <location>
        <begin position="1"/>
        <end position="439"/>
    </location>
</feature>
<feature type="domain" description="EngA-type G 1">
    <location>
        <begin position="2"/>
        <end position="168"/>
    </location>
</feature>
<feature type="domain" description="EngA-type G 2">
    <location>
        <begin position="181"/>
        <end position="357"/>
    </location>
</feature>
<feature type="domain" description="KH-like" evidence="1">
    <location>
        <begin position="358"/>
        <end position="439"/>
    </location>
</feature>
<feature type="binding site" evidence="1">
    <location>
        <begin position="8"/>
        <end position="15"/>
    </location>
    <ligand>
        <name>GTP</name>
        <dbReference type="ChEBI" id="CHEBI:37565"/>
        <label>1</label>
    </ligand>
</feature>
<feature type="binding site" evidence="1">
    <location>
        <begin position="55"/>
        <end position="59"/>
    </location>
    <ligand>
        <name>GTP</name>
        <dbReference type="ChEBI" id="CHEBI:37565"/>
        <label>1</label>
    </ligand>
</feature>
<feature type="binding site" evidence="1">
    <location>
        <begin position="118"/>
        <end position="121"/>
    </location>
    <ligand>
        <name>GTP</name>
        <dbReference type="ChEBI" id="CHEBI:37565"/>
        <label>1</label>
    </ligand>
</feature>
<feature type="binding site" evidence="1">
    <location>
        <begin position="187"/>
        <end position="194"/>
    </location>
    <ligand>
        <name>GTP</name>
        <dbReference type="ChEBI" id="CHEBI:37565"/>
        <label>2</label>
    </ligand>
</feature>
<feature type="binding site" evidence="1">
    <location>
        <begin position="234"/>
        <end position="238"/>
    </location>
    <ligand>
        <name>GTP</name>
        <dbReference type="ChEBI" id="CHEBI:37565"/>
        <label>2</label>
    </ligand>
</feature>
<feature type="binding site" evidence="1">
    <location>
        <begin position="300"/>
        <end position="303"/>
    </location>
    <ligand>
        <name>GTP</name>
        <dbReference type="ChEBI" id="CHEBI:37565"/>
        <label>2</label>
    </ligand>
</feature>
<sequence length="439" mass="50028">MATVLIVGKPNVGKSTLFNKLVRKKKAIVEDEEGVTRDPVQDIVEWYGKTFKLVDTCGVFDNPQDIISQKMKEITLNMIREADLVLFVVDGKRGITKEDESLADFLRKSNVDTILVANKAENLREFEREVKPELYSLGFGEPIPVSAEHNINLDTLLETIIKKLEEKGLDLESKPEITDAIKVAIVGRPNVGKSTLFNAILNKERALVSPIPGTTRDPVDEEVFIDGKKYVFVDTAGLRRRSRVEPRTVEKYSNYRVVDSIEKADVVVIVLDATQGITRQDQRIAGLVERRGRASVVVFNKWDLVEHREKRHDEFTKLFREKLYFIDYSPLIFTSADKGWNVDRVIDAINLAYASYTTKVPSSAINSALQKVLAFTNLPRGLKIFFGLQVDIKPPTFLFFVNSIEKIKNPQKVFLRKLIRDYVFPFEGSPIFLKFKRSR</sequence>
<protein>
    <recommendedName>
        <fullName evidence="1">GTPase Der</fullName>
    </recommendedName>
    <alternativeName>
        <fullName evidence="1">GTP-binding protein EngA</fullName>
    </alternativeName>
</protein>
<evidence type="ECO:0000255" key="1">
    <source>
        <dbReference type="HAMAP-Rule" id="MF_00195"/>
    </source>
</evidence>
<name>DER_THESQ</name>
<gene>
    <name evidence="1" type="primary">der</name>
    <name type="synonym">engA</name>
    <name type="ordered locus">TRQ2_1338</name>
</gene>
<proteinExistence type="inferred from homology"/>
<reference key="1">
    <citation type="journal article" date="2011" name="J. Bacteriol.">
        <title>Genome sequence of Thermotoga sp. strain RQ2, a hyperthermophilic bacterium isolated from a geothermally heated region of the seafloor near Ribeira Quente, the Azores.</title>
        <authorList>
            <person name="Swithers K.S."/>
            <person name="DiPippo J.L."/>
            <person name="Bruce D.C."/>
            <person name="Detter C."/>
            <person name="Tapia R."/>
            <person name="Han S."/>
            <person name="Saunders E."/>
            <person name="Goodwin L.A."/>
            <person name="Han J."/>
            <person name="Woyke T."/>
            <person name="Pitluck S."/>
            <person name="Pennacchio L."/>
            <person name="Nolan M."/>
            <person name="Mikhailova N."/>
            <person name="Lykidis A."/>
            <person name="Land M.L."/>
            <person name="Brettin T."/>
            <person name="Stetter K.O."/>
            <person name="Nelson K.E."/>
            <person name="Gogarten J.P."/>
            <person name="Noll K.M."/>
        </authorList>
    </citation>
    <scope>NUCLEOTIDE SEQUENCE [LARGE SCALE GENOMIC DNA]</scope>
    <source>
        <strain>RQ2</strain>
    </source>
</reference>
<accession>B1LBI4</accession>
<organism>
    <name type="scientific">Thermotoga sp. (strain RQ2)</name>
    <dbReference type="NCBI Taxonomy" id="126740"/>
    <lineage>
        <taxon>Bacteria</taxon>
        <taxon>Thermotogati</taxon>
        <taxon>Thermotogota</taxon>
        <taxon>Thermotogae</taxon>
        <taxon>Thermotogales</taxon>
        <taxon>Thermotogaceae</taxon>
        <taxon>Thermotoga</taxon>
    </lineage>
</organism>